<reference key="1">
    <citation type="journal article" date="2007" name="Science">
        <title>Genome sequence of Aedes aegypti, a major arbovirus vector.</title>
        <authorList>
            <person name="Nene V."/>
            <person name="Wortman J.R."/>
            <person name="Lawson D."/>
            <person name="Haas B.J."/>
            <person name="Kodira C.D."/>
            <person name="Tu Z.J."/>
            <person name="Loftus B.J."/>
            <person name="Xi Z."/>
            <person name="Megy K."/>
            <person name="Grabherr M."/>
            <person name="Ren Q."/>
            <person name="Zdobnov E.M."/>
            <person name="Lobo N.F."/>
            <person name="Campbell K.S."/>
            <person name="Brown S.E."/>
            <person name="Bonaldo M.F."/>
            <person name="Zhu J."/>
            <person name="Sinkins S.P."/>
            <person name="Hogenkamp D.G."/>
            <person name="Amedeo P."/>
            <person name="Arensburger P."/>
            <person name="Atkinson P.W."/>
            <person name="Bidwell S.L."/>
            <person name="Biedler J."/>
            <person name="Birney E."/>
            <person name="Bruggner R.V."/>
            <person name="Costas J."/>
            <person name="Coy M.R."/>
            <person name="Crabtree J."/>
            <person name="Crawford M."/>
            <person name="DeBruyn B."/>
            <person name="DeCaprio D."/>
            <person name="Eiglmeier K."/>
            <person name="Eisenstadt E."/>
            <person name="El-Dorry H."/>
            <person name="Gelbart W.M."/>
            <person name="Gomes S.L."/>
            <person name="Hammond M."/>
            <person name="Hannick L.I."/>
            <person name="Hogan J.R."/>
            <person name="Holmes M.H."/>
            <person name="Jaffe D."/>
            <person name="Johnston S.J."/>
            <person name="Kennedy R.C."/>
            <person name="Koo H."/>
            <person name="Kravitz S."/>
            <person name="Kriventseva E.V."/>
            <person name="Kulp D."/>
            <person name="Labutti K."/>
            <person name="Lee E."/>
            <person name="Li S."/>
            <person name="Lovin D.D."/>
            <person name="Mao C."/>
            <person name="Mauceli E."/>
            <person name="Menck C.F."/>
            <person name="Miller J.R."/>
            <person name="Montgomery P."/>
            <person name="Mori A."/>
            <person name="Nascimento A.L."/>
            <person name="Naveira H.F."/>
            <person name="Nusbaum C."/>
            <person name="O'Leary S.B."/>
            <person name="Orvis J."/>
            <person name="Pertea M."/>
            <person name="Quesneville H."/>
            <person name="Reidenbach K.R."/>
            <person name="Rogers Y.-H.C."/>
            <person name="Roth C.W."/>
            <person name="Schneider J.R."/>
            <person name="Schatz M."/>
            <person name="Shumway M."/>
            <person name="Stanke M."/>
            <person name="Stinson E.O."/>
            <person name="Tubio J.M.C."/>
            <person name="Vanzee J.P."/>
            <person name="Verjovski-Almeida S."/>
            <person name="Werner D."/>
            <person name="White O.R."/>
            <person name="Wyder S."/>
            <person name="Zeng Q."/>
            <person name="Zhao Q."/>
            <person name="Zhao Y."/>
            <person name="Hill C.A."/>
            <person name="Raikhel A.S."/>
            <person name="Soares M.B."/>
            <person name="Knudson D.L."/>
            <person name="Lee N.H."/>
            <person name="Galagan J."/>
            <person name="Salzberg S.L."/>
            <person name="Paulsen I.T."/>
            <person name="Dimopoulos G."/>
            <person name="Collins F.H."/>
            <person name="Bruce B."/>
            <person name="Fraser-Liggett C.M."/>
            <person name="Severson D.W."/>
        </authorList>
    </citation>
    <scope>NUCLEOTIDE SEQUENCE [LARGE SCALE GENOMIC DNA]</scope>
    <source>
        <strain>LVPib12</strain>
    </source>
</reference>
<comment type="function">
    <text evidence="2">Component of the transcription regulatory histone acetylation (HAT) complex SAGA, a multiprotein complex that activates transcription by remodeling chromatin and mediating histone acetylation and deubiquitination. Within the SAGA complex, participates in a subcomplex that specifically deubiquitinates histone H2B. The SAGA complex is recruited to specific gene promoters by activators, where it is required for transcription.</text>
</comment>
<comment type="subunit">
    <text evidence="1">Component of some SAGA transcription coactivator-HAT complexes. Within the SAGA complex, participates in a subcomplex of SAGA called the DUB module (deubiquitination module) (By similarity).</text>
</comment>
<comment type="subcellular location">
    <subcellularLocation>
        <location evidence="2">Nucleus</location>
    </subcellularLocation>
</comment>
<comment type="domain">
    <text evidence="2">The long N-terminal helix forms part of the 'assembly lobe' of the SAGA deubiquitination module.</text>
</comment>
<comment type="domain">
    <text evidence="2">The C-terminal SGF11-type zinc-finger domain forms part of the 'catalytic lobe' of the SAGA deubiquitination module.</text>
</comment>
<comment type="similarity">
    <text evidence="2">Belongs to the SGF11 family.</text>
</comment>
<keyword id="KW-0010">Activator</keyword>
<keyword id="KW-0156">Chromatin regulator</keyword>
<keyword id="KW-0479">Metal-binding</keyword>
<keyword id="KW-0539">Nucleus</keyword>
<keyword id="KW-1185">Reference proteome</keyword>
<keyword id="KW-0804">Transcription</keyword>
<keyword id="KW-0805">Transcription regulation</keyword>
<keyword id="KW-0862">Zinc</keyword>
<keyword id="KW-0863">Zinc-finger</keyword>
<proteinExistence type="inferred from homology"/>
<organism>
    <name type="scientific">Aedes aegypti</name>
    <name type="common">Yellowfever mosquito</name>
    <name type="synonym">Culex aegypti</name>
    <dbReference type="NCBI Taxonomy" id="7159"/>
    <lineage>
        <taxon>Eukaryota</taxon>
        <taxon>Metazoa</taxon>
        <taxon>Ecdysozoa</taxon>
        <taxon>Arthropoda</taxon>
        <taxon>Hexapoda</taxon>
        <taxon>Insecta</taxon>
        <taxon>Pterygota</taxon>
        <taxon>Neoptera</taxon>
        <taxon>Endopterygota</taxon>
        <taxon>Diptera</taxon>
        <taxon>Nematocera</taxon>
        <taxon>Culicoidea</taxon>
        <taxon>Culicidae</taxon>
        <taxon>Culicinae</taxon>
        <taxon>Aedini</taxon>
        <taxon>Aedes</taxon>
        <taxon>Stegomyia</taxon>
    </lineage>
</organism>
<sequence>MGENEPIHIEYADETELLTEFRQYMADPDTREKAANYLLDSLVDEMILGVVFEVHHAYKTGSGAAIEGQPEDCKPYTIVDLPDMDVFGSSNSKKAIDCSCPNCNRIVAASRFAPHLEKCMGMGRNSSRIASRRIANTRDGGNYFGADEDDEDDADWSGEKRKKKIAPVRTNGSKKNGKTS</sequence>
<protein>
    <recommendedName>
        <fullName evidence="2">SAGA-associated factor 11 homolog</fullName>
    </recommendedName>
</protein>
<dbReference type="EMBL" id="CH477308">
    <property type="protein sequence ID" value="EAT44026.1"/>
    <property type="molecule type" value="Genomic_DNA"/>
</dbReference>
<dbReference type="RefSeq" id="XP_001649382.1">
    <property type="nucleotide sequence ID" value="XM_001649332.1"/>
</dbReference>
<dbReference type="SMR" id="Q17CJ5"/>
<dbReference type="FunCoup" id="Q17CJ5">
    <property type="interactions" value="222"/>
</dbReference>
<dbReference type="STRING" id="7159.Q17CJ5"/>
<dbReference type="PaxDb" id="7159-AAEL004574-PA"/>
<dbReference type="GeneID" id="5565040"/>
<dbReference type="KEGG" id="aag:5565040"/>
<dbReference type="CTD" id="40035"/>
<dbReference type="VEuPathDB" id="VectorBase:AAEL004574"/>
<dbReference type="eggNOG" id="KOG2612">
    <property type="taxonomic scope" value="Eukaryota"/>
</dbReference>
<dbReference type="HOGENOM" id="CLU_100743_0_0_1"/>
<dbReference type="InParanoid" id="Q17CJ5"/>
<dbReference type="OMA" id="RMCEMPN"/>
<dbReference type="OrthoDB" id="21557at2759"/>
<dbReference type="PhylomeDB" id="Q17CJ5"/>
<dbReference type="Proteomes" id="UP000008820">
    <property type="component" value="Unassembled WGS sequence"/>
</dbReference>
<dbReference type="Proteomes" id="UP000682892">
    <property type="component" value="Chromosome 1"/>
</dbReference>
<dbReference type="GO" id="GO:0071819">
    <property type="term" value="C:DUBm complex"/>
    <property type="evidence" value="ECO:0007669"/>
    <property type="project" value="UniProtKB-UniRule"/>
</dbReference>
<dbReference type="GO" id="GO:0000124">
    <property type="term" value="C:SAGA complex"/>
    <property type="evidence" value="ECO:0007669"/>
    <property type="project" value="UniProtKB-UniRule"/>
</dbReference>
<dbReference type="GO" id="GO:0003713">
    <property type="term" value="F:transcription coactivator activity"/>
    <property type="evidence" value="ECO:0007669"/>
    <property type="project" value="UniProtKB-UniRule"/>
</dbReference>
<dbReference type="GO" id="GO:0008270">
    <property type="term" value="F:zinc ion binding"/>
    <property type="evidence" value="ECO:0007669"/>
    <property type="project" value="UniProtKB-UniRule"/>
</dbReference>
<dbReference type="GO" id="GO:0006325">
    <property type="term" value="P:chromatin organization"/>
    <property type="evidence" value="ECO:0007669"/>
    <property type="project" value="UniProtKB-KW"/>
</dbReference>
<dbReference type="GO" id="GO:0006357">
    <property type="term" value="P:regulation of transcription by RNA polymerase II"/>
    <property type="evidence" value="ECO:0007669"/>
    <property type="project" value="TreeGrafter"/>
</dbReference>
<dbReference type="FunFam" id="3.30.160.60:FF:000118">
    <property type="entry name" value="Ataxin-7-like protein 3"/>
    <property type="match status" value="1"/>
</dbReference>
<dbReference type="Gene3D" id="3.30.160.60">
    <property type="entry name" value="Classic Zinc Finger"/>
    <property type="match status" value="1"/>
</dbReference>
<dbReference type="HAMAP" id="MF_03047">
    <property type="entry name" value="Sgf11"/>
    <property type="match status" value="1"/>
</dbReference>
<dbReference type="InterPro" id="IPR013246">
    <property type="entry name" value="SAGA_su_Sgf11"/>
</dbReference>
<dbReference type="InterPro" id="IPR051078">
    <property type="entry name" value="SGF11"/>
</dbReference>
<dbReference type="PANTHER" id="PTHR46367">
    <property type="entry name" value="ATAXIN-7-LIKE PROTEIN 3"/>
    <property type="match status" value="1"/>
</dbReference>
<dbReference type="PANTHER" id="PTHR46367:SF1">
    <property type="entry name" value="ATAXIN-7-LIKE PROTEIN 3"/>
    <property type="match status" value="1"/>
</dbReference>
<dbReference type="Pfam" id="PF08209">
    <property type="entry name" value="Sgf11"/>
    <property type="match status" value="1"/>
</dbReference>
<evidence type="ECO:0000250" key="1"/>
<evidence type="ECO:0000255" key="2">
    <source>
        <dbReference type="HAMAP-Rule" id="MF_03047"/>
    </source>
</evidence>
<evidence type="ECO:0000256" key="3">
    <source>
        <dbReference type="SAM" id="MobiDB-lite"/>
    </source>
</evidence>
<name>SGF11_AEDAE</name>
<gene>
    <name evidence="2" type="primary">Sgf11</name>
    <name type="ORF">AAEL004574</name>
</gene>
<feature type="chain" id="PRO_0000367518" description="SAGA-associated factor 11 homolog">
    <location>
        <begin position="1"/>
        <end position="180"/>
    </location>
</feature>
<feature type="zinc finger region" description="SGF11-type" evidence="2">
    <location>
        <begin position="98"/>
        <end position="119"/>
    </location>
</feature>
<feature type="region of interest" description="Disordered" evidence="3">
    <location>
        <begin position="138"/>
        <end position="180"/>
    </location>
</feature>
<feature type="compositionally biased region" description="Acidic residues" evidence="3">
    <location>
        <begin position="146"/>
        <end position="156"/>
    </location>
</feature>
<accession>Q17CJ5</accession>